<gene>
    <name type="primary">gtf3a</name>
</gene>
<evidence type="ECO:0000250" key="1">
    <source>
        <dbReference type="UniProtKB" id="P03001"/>
    </source>
</evidence>
<evidence type="ECO:0000250" key="2">
    <source>
        <dbReference type="UniProtKB" id="P17842"/>
    </source>
</evidence>
<evidence type="ECO:0000250" key="3">
    <source>
        <dbReference type="UniProtKB" id="Q92664"/>
    </source>
</evidence>
<evidence type="ECO:0000255" key="4">
    <source>
        <dbReference type="PROSITE-ProRule" id="PRU00042"/>
    </source>
</evidence>
<evidence type="ECO:0000256" key="5">
    <source>
        <dbReference type="SAM" id="MobiDB-lite"/>
    </source>
</evidence>
<feature type="chain" id="PRO_0000047081" description="Transcription factor IIIA">
    <location>
        <begin position="1"/>
        <end position="339"/>
    </location>
</feature>
<feature type="zinc finger region" description="C2H2-type 1" evidence="4">
    <location>
        <begin position="12"/>
        <end position="36"/>
    </location>
</feature>
<feature type="zinc finger region" description="C2H2-type 2" evidence="4">
    <location>
        <begin position="42"/>
        <end position="66"/>
    </location>
</feature>
<feature type="zinc finger region" description="C2H2-type 3" evidence="4">
    <location>
        <begin position="72"/>
        <end position="97"/>
    </location>
</feature>
<feature type="zinc finger region" description="C2H2-type 4" evidence="4">
    <location>
        <begin position="104"/>
        <end position="128"/>
    </location>
</feature>
<feature type="zinc finger region" description="C2H2-type 5" evidence="4">
    <location>
        <begin position="134"/>
        <end position="158"/>
    </location>
</feature>
<feature type="zinc finger region" description="C2H2-type 6" evidence="4">
    <location>
        <begin position="161"/>
        <end position="187"/>
    </location>
</feature>
<feature type="zinc finger region" description="C2H2-type 7" evidence="4">
    <location>
        <begin position="190"/>
        <end position="212"/>
    </location>
</feature>
<feature type="zinc finger region" description="C2H2-type 8" evidence="4">
    <location>
        <begin position="219"/>
        <end position="244"/>
    </location>
</feature>
<feature type="zinc finger region" description="C2H2-type 9" evidence="4">
    <location>
        <begin position="250"/>
        <end position="274"/>
    </location>
</feature>
<feature type="region of interest" description="Disordered" evidence="5">
    <location>
        <begin position="271"/>
        <end position="339"/>
    </location>
</feature>
<feature type="compositionally biased region" description="Basic residues" evidence="5">
    <location>
        <begin position="299"/>
        <end position="309"/>
    </location>
</feature>
<feature type="compositionally biased region" description="Polar residues" evidence="5">
    <location>
        <begin position="311"/>
        <end position="323"/>
    </location>
</feature>
<comment type="function">
    <text evidence="1 2 3">Involved in ribosomal large subunit biogenesis. Interacts with the internal control region (ICR) of approximately 50 bases within the 5S RNA genes, is required for correct transcription of these genes by RNA polymerase III. Also binds the transcribed 5S RNA's.</text>
</comment>
<comment type="subcellular location">
    <subcellularLocation>
        <location>Nucleus</location>
    </subcellularLocation>
</comment>
<reference key="1">
    <citation type="journal article" date="1992" name="Gene">
        <title>Comparison of the sequence and structure of transcription factor IIIA from Bufo americanus and Rana pipiens.</title>
        <authorList>
            <person name="Gaskins C.J."/>
            <person name="Smith J.F."/>
            <person name="Ogilvie M.K."/>
            <person name="Hanas J.S."/>
        </authorList>
    </citation>
    <scope>NUCLEOTIDE SEQUENCE [MRNA]</scope>
    <source>
        <tissue>Ovary</tissue>
    </source>
</reference>
<organism>
    <name type="scientific">Anaxyrus americanus</name>
    <name type="common">American toad</name>
    <name type="synonym">Bufo americanus</name>
    <dbReference type="NCBI Taxonomy" id="8389"/>
    <lineage>
        <taxon>Eukaryota</taxon>
        <taxon>Metazoa</taxon>
        <taxon>Chordata</taxon>
        <taxon>Craniata</taxon>
        <taxon>Vertebrata</taxon>
        <taxon>Euteleostomi</taxon>
        <taxon>Amphibia</taxon>
        <taxon>Batrachia</taxon>
        <taxon>Anura</taxon>
        <taxon>Neobatrachia</taxon>
        <taxon>Hyloidea</taxon>
        <taxon>Bufonidae</taxon>
        <taxon>Anaxyrus</taxon>
    </lineage>
</organism>
<sequence length="339" mass="39500">MGEKLPVVYKRFICSFPDCNATYNKNRKLQAHLCKHTGERPFPCTYEGCEKGFVTLHHLNRHVLSHTGEKPCKCETENCNLAFTTASNMRLHFKRAHSSPAQVYVCYFADCGQQFRKHNQLKIHQYIHTNQQPFKCSHEGCDKCYASPSRLKRHEKTHAGYPCRKDSTCPFVGKTWSDYMKHAAELHSEVTCSICNRTFKRKSFLKEHKKIHREERIVYRCPRENCDRTYTTKFNLKSHILTFHENLRPFVCEHEGCGKTFAMKQSLDRHFNTHDPEKKKMVKPPRPVRSLASRLSGYKPKKSKKKKKPSQTPAMESQEQQPDASKADPLPVLENLTLK</sequence>
<protein>
    <recommendedName>
        <fullName>Transcription factor IIIA</fullName>
        <shortName>TFIIIA</shortName>
    </recommendedName>
</protein>
<accession>P34694</accession>
<proteinExistence type="evidence at transcript level"/>
<dbReference type="EMBL" id="X58366">
    <property type="protein sequence ID" value="CAA41259.1"/>
    <property type="molecule type" value="mRNA"/>
</dbReference>
<dbReference type="PIR" id="JC1442">
    <property type="entry name" value="JC1442"/>
</dbReference>
<dbReference type="SMR" id="P34694"/>
<dbReference type="GO" id="GO:0005634">
    <property type="term" value="C:nucleus"/>
    <property type="evidence" value="ECO:0007669"/>
    <property type="project" value="UniProtKB-SubCell"/>
</dbReference>
<dbReference type="GO" id="GO:0003677">
    <property type="term" value="F:DNA binding"/>
    <property type="evidence" value="ECO:0007669"/>
    <property type="project" value="UniProtKB-KW"/>
</dbReference>
<dbReference type="GO" id="GO:0003723">
    <property type="term" value="F:RNA binding"/>
    <property type="evidence" value="ECO:0007669"/>
    <property type="project" value="UniProtKB-KW"/>
</dbReference>
<dbReference type="GO" id="GO:0008270">
    <property type="term" value="F:zinc ion binding"/>
    <property type="evidence" value="ECO:0007669"/>
    <property type="project" value="UniProtKB-KW"/>
</dbReference>
<dbReference type="GO" id="GO:0042273">
    <property type="term" value="P:ribosomal large subunit biogenesis"/>
    <property type="evidence" value="ECO:0000250"/>
    <property type="project" value="UniProtKB"/>
</dbReference>
<dbReference type="FunFam" id="3.30.160.60:FF:001572">
    <property type="entry name" value="General transcription factor IIIA"/>
    <property type="match status" value="1"/>
</dbReference>
<dbReference type="FunFam" id="3.30.160.60:FF:001102">
    <property type="entry name" value="Transcription factor IIIA"/>
    <property type="match status" value="2"/>
</dbReference>
<dbReference type="FunFam" id="3.30.160.60:FF:001998">
    <property type="entry name" value="Transcription factor IIIA"/>
    <property type="match status" value="1"/>
</dbReference>
<dbReference type="FunFam" id="3.30.160.60:FF:003303">
    <property type="entry name" value="Transcription factor IIIA"/>
    <property type="match status" value="1"/>
</dbReference>
<dbReference type="Gene3D" id="3.30.160.60">
    <property type="entry name" value="Classic Zinc Finger"/>
    <property type="match status" value="9"/>
</dbReference>
<dbReference type="InterPro" id="IPR054599">
    <property type="entry name" value="TFIIIA_Zfn-C2H2"/>
</dbReference>
<dbReference type="InterPro" id="IPR051061">
    <property type="entry name" value="Zinc_finger_trans_reg"/>
</dbReference>
<dbReference type="InterPro" id="IPR036236">
    <property type="entry name" value="Znf_C2H2_sf"/>
</dbReference>
<dbReference type="InterPro" id="IPR013087">
    <property type="entry name" value="Znf_C2H2_type"/>
</dbReference>
<dbReference type="PANTHER" id="PTHR46179:SF1">
    <property type="entry name" value="TRANSCRIPTION FACTOR IIIA"/>
    <property type="match status" value="1"/>
</dbReference>
<dbReference type="PANTHER" id="PTHR46179">
    <property type="entry name" value="ZINC FINGER PROTEIN"/>
    <property type="match status" value="1"/>
</dbReference>
<dbReference type="Pfam" id="PF22110">
    <property type="entry name" value="TFIIIA_zf-C2H2"/>
    <property type="match status" value="1"/>
</dbReference>
<dbReference type="Pfam" id="PF00096">
    <property type="entry name" value="zf-C2H2"/>
    <property type="match status" value="4"/>
</dbReference>
<dbReference type="SMART" id="SM00355">
    <property type="entry name" value="ZnF_C2H2"/>
    <property type="match status" value="9"/>
</dbReference>
<dbReference type="SUPFAM" id="SSF57667">
    <property type="entry name" value="beta-beta-alpha zinc fingers"/>
    <property type="match status" value="6"/>
</dbReference>
<dbReference type="PROSITE" id="PS00028">
    <property type="entry name" value="ZINC_FINGER_C2H2_1"/>
    <property type="match status" value="8"/>
</dbReference>
<dbReference type="PROSITE" id="PS50157">
    <property type="entry name" value="ZINC_FINGER_C2H2_2"/>
    <property type="match status" value="8"/>
</dbReference>
<name>TF3A_ANAAE</name>
<keyword id="KW-0238">DNA-binding</keyword>
<keyword id="KW-0479">Metal-binding</keyword>
<keyword id="KW-0539">Nucleus</keyword>
<keyword id="KW-0677">Repeat</keyword>
<keyword id="KW-0690">Ribosome biogenesis</keyword>
<keyword id="KW-0694">RNA-binding</keyword>
<keyword id="KW-0804">Transcription</keyword>
<keyword id="KW-0805">Transcription regulation</keyword>
<keyword id="KW-0862">Zinc</keyword>
<keyword id="KW-0863">Zinc-finger</keyword>